<gene>
    <name evidence="1" type="primary">bchL</name>
    <name type="ordered locus">RGE_33490</name>
</gene>
<sequence length="302" mass="32658">MSTATISPSQIGRGARPDGEGSVQVQMETGAKIGNAKVFAIYGKGGIGKSTTSSNLSVAFSKLGKRVLQIGCDPKHDSTFTLTKRMVPTVIDVLETVNFHPEELRVEDFVFEGTNGVMCVEAGGPPAGTGCGGYVVGQTVKLLKEHHLLEETDVVVFDVLGDVVCGGFAAPLQHADRALIVTANDFDSIFAANRIVQAIGAKAKNYNVRLGGIIANRSDATDQIDKFNERIGMRSLARIPALDVIRKSRLKKATLFEMEESPEVLAVQAEYLQLAQRLWDGVDPLYCEPLKDRDIFDLLGYD</sequence>
<proteinExistence type="inferred from homology"/>
<evidence type="ECO:0000255" key="1">
    <source>
        <dbReference type="HAMAP-Rule" id="MF_00355"/>
    </source>
</evidence>
<evidence type="ECO:0000256" key="2">
    <source>
        <dbReference type="SAM" id="MobiDB-lite"/>
    </source>
</evidence>
<name>BCHL_RUBGI</name>
<protein>
    <recommendedName>
        <fullName evidence="1">Light-independent protochlorophyllide reductase iron-sulfur ATP-binding protein</fullName>
        <shortName evidence="1">DPOR subunit L</shortName>
        <shortName evidence="1">LI-POR subunit L</shortName>
        <ecNumber evidence="1">1.3.7.7</ecNumber>
    </recommendedName>
</protein>
<feature type="chain" id="PRO_0000139580" description="Light-independent protochlorophyllide reductase iron-sulfur ATP-binding protein">
    <location>
        <begin position="1"/>
        <end position="302"/>
    </location>
</feature>
<feature type="region of interest" description="Disordered" evidence="2">
    <location>
        <begin position="1"/>
        <end position="21"/>
    </location>
</feature>
<feature type="compositionally biased region" description="Polar residues" evidence="2">
    <location>
        <begin position="1"/>
        <end position="10"/>
    </location>
</feature>
<feature type="binding site" evidence="1">
    <location>
        <begin position="46"/>
        <end position="51"/>
    </location>
    <ligand>
        <name>ATP</name>
        <dbReference type="ChEBI" id="CHEBI:30616"/>
    </ligand>
</feature>
<feature type="binding site" evidence="1">
    <location>
        <position position="50"/>
    </location>
    <ligand>
        <name>Mg(2+)</name>
        <dbReference type="ChEBI" id="CHEBI:18420"/>
    </ligand>
</feature>
<feature type="binding site" evidence="1">
    <location>
        <position position="75"/>
    </location>
    <ligand>
        <name>ATP</name>
        <dbReference type="ChEBI" id="CHEBI:30616"/>
    </ligand>
</feature>
<feature type="binding site" evidence="1">
    <location>
        <position position="131"/>
    </location>
    <ligand>
        <name>[4Fe-4S] cluster</name>
        <dbReference type="ChEBI" id="CHEBI:49883"/>
        <note>ligand shared between dimeric partners</note>
    </ligand>
</feature>
<feature type="binding site" evidence="1">
    <location>
        <position position="165"/>
    </location>
    <ligand>
        <name>[4Fe-4S] cluster</name>
        <dbReference type="ChEBI" id="CHEBI:49883"/>
        <note>ligand shared between dimeric partners</note>
    </ligand>
</feature>
<feature type="binding site" evidence="1">
    <location>
        <begin position="216"/>
        <end position="217"/>
    </location>
    <ligand>
        <name>ATP</name>
        <dbReference type="ChEBI" id="CHEBI:30616"/>
    </ligand>
</feature>
<feature type="binding site" evidence="1">
    <location>
        <begin position="240"/>
        <end position="242"/>
    </location>
    <ligand>
        <name>ATP</name>
        <dbReference type="ChEBI" id="CHEBI:30616"/>
    </ligand>
</feature>
<accession>Q9JPA5</accession>
<accession>I0HUK1</accession>
<comment type="function">
    <text evidence="1">Component of the dark-operative protochlorophyllide reductase (DPOR) that uses Mg-ATP and reduced ferredoxin to reduce ring D of protochlorophyllide (Pchlide) to form chlorophyllide a (Chlide). This reaction is light-independent. The L component serves as a unique electron donor to the NB-component of the complex, and binds Mg-ATP.</text>
</comment>
<comment type="catalytic activity">
    <reaction evidence="1">
        <text>chlorophyllide a + oxidized 2[4Fe-4S]-[ferredoxin] + 2 ADP + 2 phosphate = protochlorophyllide a + reduced 2[4Fe-4S]-[ferredoxin] + 2 ATP + 2 H2O</text>
        <dbReference type="Rhea" id="RHEA:28202"/>
        <dbReference type="Rhea" id="RHEA-COMP:10002"/>
        <dbReference type="Rhea" id="RHEA-COMP:10004"/>
        <dbReference type="ChEBI" id="CHEBI:15377"/>
        <dbReference type="ChEBI" id="CHEBI:30616"/>
        <dbReference type="ChEBI" id="CHEBI:33722"/>
        <dbReference type="ChEBI" id="CHEBI:33723"/>
        <dbReference type="ChEBI" id="CHEBI:43474"/>
        <dbReference type="ChEBI" id="CHEBI:83348"/>
        <dbReference type="ChEBI" id="CHEBI:83350"/>
        <dbReference type="ChEBI" id="CHEBI:456216"/>
        <dbReference type="EC" id="1.3.7.7"/>
    </reaction>
</comment>
<comment type="cofactor">
    <cofactor evidence="1">
        <name>[4Fe-4S] cluster</name>
        <dbReference type="ChEBI" id="CHEBI:49883"/>
    </cofactor>
    <text evidence="1">Binds 1 [4Fe-4S] cluster per dimer.</text>
</comment>
<comment type="pathway">
    <text evidence="1">Porphyrin-containing compound metabolism; bacteriochlorophyll biosynthesis (light-independent).</text>
</comment>
<comment type="subunit">
    <text evidence="1">Homodimer. Protochlorophyllide reductase is composed of three subunits; BchL, BchN and BchB.</text>
</comment>
<comment type="similarity">
    <text evidence="1">Belongs to the NifH/BchL/ChlL family.</text>
</comment>
<dbReference type="EC" id="1.3.7.7" evidence="1"/>
<dbReference type="EMBL" id="AB034704">
    <property type="protein sequence ID" value="BAA94056.1"/>
    <property type="molecule type" value="Genomic_DNA"/>
</dbReference>
<dbReference type="EMBL" id="AP012320">
    <property type="protein sequence ID" value="BAL96688.1"/>
    <property type="molecule type" value="Genomic_DNA"/>
</dbReference>
<dbReference type="PIR" id="T50903">
    <property type="entry name" value="T50903"/>
</dbReference>
<dbReference type="RefSeq" id="WP_014429549.1">
    <property type="nucleotide sequence ID" value="NC_017075.1"/>
</dbReference>
<dbReference type="SMR" id="Q9JPA5"/>
<dbReference type="STRING" id="983917.RGE_33490"/>
<dbReference type="KEGG" id="rge:RGE_33490"/>
<dbReference type="PATRIC" id="fig|983917.3.peg.3275"/>
<dbReference type="eggNOG" id="COG1348">
    <property type="taxonomic scope" value="Bacteria"/>
</dbReference>
<dbReference type="HOGENOM" id="CLU_059373_2_0_4"/>
<dbReference type="UniPathway" id="UPA00671"/>
<dbReference type="Proteomes" id="UP000007883">
    <property type="component" value="Chromosome"/>
</dbReference>
<dbReference type="GO" id="GO:0051539">
    <property type="term" value="F:4 iron, 4 sulfur cluster binding"/>
    <property type="evidence" value="ECO:0007669"/>
    <property type="project" value="UniProtKB-UniRule"/>
</dbReference>
<dbReference type="GO" id="GO:0005524">
    <property type="term" value="F:ATP binding"/>
    <property type="evidence" value="ECO:0007669"/>
    <property type="project" value="UniProtKB-UniRule"/>
</dbReference>
<dbReference type="GO" id="GO:0046872">
    <property type="term" value="F:metal ion binding"/>
    <property type="evidence" value="ECO:0007669"/>
    <property type="project" value="UniProtKB-KW"/>
</dbReference>
<dbReference type="GO" id="GO:0016730">
    <property type="term" value="F:oxidoreductase activity, acting on iron-sulfur proteins as donors"/>
    <property type="evidence" value="ECO:0007669"/>
    <property type="project" value="InterPro"/>
</dbReference>
<dbReference type="GO" id="GO:0016636">
    <property type="term" value="F:oxidoreductase activity, acting on the CH-CH group of donors, iron-sulfur protein as acceptor"/>
    <property type="evidence" value="ECO:0007669"/>
    <property type="project" value="UniProtKB-UniRule"/>
</dbReference>
<dbReference type="GO" id="GO:0036070">
    <property type="term" value="P:light-independent bacteriochlorophyll biosynthetic process"/>
    <property type="evidence" value="ECO:0007669"/>
    <property type="project" value="UniProtKB-UniRule"/>
</dbReference>
<dbReference type="GO" id="GO:0019685">
    <property type="term" value="P:photosynthesis, dark reaction"/>
    <property type="evidence" value="ECO:0007669"/>
    <property type="project" value="InterPro"/>
</dbReference>
<dbReference type="CDD" id="cd02032">
    <property type="entry name" value="Bchl-like"/>
    <property type="match status" value="1"/>
</dbReference>
<dbReference type="Gene3D" id="3.40.50.300">
    <property type="entry name" value="P-loop containing nucleotide triphosphate hydrolases"/>
    <property type="match status" value="1"/>
</dbReference>
<dbReference type="HAMAP" id="MF_00355">
    <property type="entry name" value="ChlL_BchL"/>
    <property type="match status" value="1"/>
</dbReference>
<dbReference type="InterPro" id="IPR030655">
    <property type="entry name" value="NifH/chlL_CS"/>
</dbReference>
<dbReference type="InterPro" id="IPR000392">
    <property type="entry name" value="NifH/frxC"/>
</dbReference>
<dbReference type="InterPro" id="IPR027417">
    <property type="entry name" value="P-loop_NTPase"/>
</dbReference>
<dbReference type="InterPro" id="IPR005971">
    <property type="entry name" value="Protochlorophyllide_ATP-bd"/>
</dbReference>
<dbReference type="NCBIfam" id="TIGR01281">
    <property type="entry name" value="DPOR_bchL"/>
    <property type="match status" value="1"/>
</dbReference>
<dbReference type="PANTHER" id="PTHR42864">
    <property type="entry name" value="LIGHT-INDEPENDENT PROTOCHLOROPHYLLIDE REDUCTASE IRON-SULFUR ATP-BINDING PROTEIN"/>
    <property type="match status" value="1"/>
</dbReference>
<dbReference type="PANTHER" id="PTHR42864:SF2">
    <property type="entry name" value="LIGHT-INDEPENDENT PROTOCHLOROPHYLLIDE REDUCTASE IRON-SULFUR ATP-BINDING PROTEIN"/>
    <property type="match status" value="1"/>
</dbReference>
<dbReference type="Pfam" id="PF00142">
    <property type="entry name" value="Fer4_NifH"/>
    <property type="match status" value="1"/>
</dbReference>
<dbReference type="PIRSF" id="PIRSF000363">
    <property type="entry name" value="Nitrogenase_iron"/>
    <property type="match status" value="1"/>
</dbReference>
<dbReference type="PRINTS" id="PR00091">
    <property type="entry name" value="NITROGNASEII"/>
</dbReference>
<dbReference type="SUPFAM" id="SSF52540">
    <property type="entry name" value="P-loop containing nucleoside triphosphate hydrolases"/>
    <property type="match status" value="1"/>
</dbReference>
<dbReference type="PROSITE" id="PS00746">
    <property type="entry name" value="NIFH_FRXC_1"/>
    <property type="match status" value="1"/>
</dbReference>
<dbReference type="PROSITE" id="PS00692">
    <property type="entry name" value="NIFH_FRXC_2"/>
    <property type="match status" value="1"/>
</dbReference>
<dbReference type="PROSITE" id="PS51026">
    <property type="entry name" value="NIFH_FRXC_3"/>
    <property type="match status" value="1"/>
</dbReference>
<organism>
    <name type="scientific">Rubrivivax gelatinosus (strain NBRC 100245 / IL144)</name>
    <dbReference type="NCBI Taxonomy" id="983917"/>
    <lineage>
        <taxon>Bacteria</taxon>
        <taxon>Pseudomonadati</taxon>
        <taxon>Pseudomonadota</taxon>
        <taxon>Betaproteobacteria</taxon>
        <taxon>Burkholderiales</taxon>
        <taxon>Sphaerotilaceae</taxon>
        <taxon>Rubrivivax</taxon>
    </lineage>
</organism>
<reference key="1">
    <citation type="journal article" date="2001" name="J. Mol. Evol.">
        <title>Horizontal transfer of the photosynthesis gene cluster and operon rearrangement in purple bacteria.</title>
        <authorList>
            <person name="Igarashi N."/>
            <person name="Harada J."/>
            <person name="Nagashima S."/>
            <person name="Matsuura K."/>
            <person name="Shimada K."/>
            <person name="Nagashima K.V.P."/>
        </authorList>
    </citation>
    <scope>NUCLEOTIDE SEQUENCE [GENOMIC DNA]</scope>
    <source>
        <strain>NBRC 100245 / IL144</strain>
    </source>
</reference>
<reference key="2">
    <citation type="journal article" date="2012" name="J. Bacteriol.">
        <title>Complete genome sequence of phototrophic betaproteobacterium Rubrivivax gelatinosus IL144.</title>
        <authorList>
            <person name="Nagashima S."/>
            <person name="Kamimura A."/>
            <person name="Shimizu T."/>
            <person name="Nakamura-Isaki S."/>
            <person name="Aono E."/>
            <person name="Sakamoto K."/>
            <person name="Ichikawa N."/>
            <person name="Nakazawa H."/>
            <person name="Sekine M."/>
            <person name="Yamazaki S."/>
            <person name="Fujita N."/>
            <person name="Shimada K."/>
            <person name="Hanada S."/>
            <person name="Nagashima K.V."/>
        </authorList>
    </citation>
    <scope>NUCLEOTIDE SEQUENCE [LARGE SCALE GENOMIC DNA]</scope>
    <source>
        <strain>NBRC 100245 / IL144</strain>
    </source>
</reference>
<keyword id="KW-0004">4Fe-4S</keyword>
<keyword id="KW-0067">ATP-binding</keyword>
<keyword id="KW-0077">Bacteriochlorophyll biosynthesis</keyword>
<keyword id="KW-0149">Chlorophyll biosynthesis</keyword>
<keyword id="KW-0408">Iron</keyword>
<keyword id="KW-0411">Iron-sulfur</keyword>
<keyword id="KW-0460">Magnesium</keyword>
<keyword id="KW-0479">Metal-binding</keyword>
<keyword id="KW-0547">Nucleotide-binding</keyword>
<keyword id="KW-0560">Oxidoreductase</keyword>
<keyword id="KW-0602">Photosynthesis</keyword>
<keyword id="KW-1185">Reference proteome</keyword>